<comment type="function">
    <text evidence="1">During virus replication, may deplete host UNG protein, and incude G2-M cell cycle arrest. Acts by targeting specific host proteins for degradation by the 26S proteasome, through association with the cellular CUL4A-DDB1 E3 ligase complex by direct interaction with host VPRPB/DCAF-1. Cell cycle arrest reportedly occurs within hours of infection and is not blocked by antiviral agents, suggesting that it is initiated by the VPR carried into the virion. Additionally, VPR induces apoptosis in a cell cycle dependent manner suggesting that these two effects are mechanistically linked. Detected in the serum and cerebrospinal fluid of AIDS patient, VPR may also induce cell death to bystander cells.</text>
</comment>
<comment type="function">
    <text evidence="1">During virus entry, plays a role in the transport of the viral pre-integration (PIC) complex to the host nucleus. This function is crucial for viral infection of non-dividing macrophages. May act directly at the nuclear pore complex, by binding nucleoporins phenylalanine-glycine (FG)-repeat regions.</text>
</comment>
<comment type="subunit">
    <text evidence="1">Homooligomer, may form homodimer. Interacts with p6-gag region of the Pr55 Gag precursor protein through a (Leu-X-X)4 motif near the C-terminus of the P6gag protein. Interacts with host UNG. May interact with host RAD23A/HHR23A. Interacts with host VPRBP/DCAF1, leading to hijack the CUL4A-RBX1-DDB1-DCAF1/VPRBP complex, mediating ubiquitination of host proteins such as TERT and ZGPAT and arrest of the cell cycle in G2 phase.</text>
</comment>
<comment type="subcellular location">
    <subcellularLocation>
        <location evidence="1">Virion</location>
    </subcellularLocation>
    <subcellularLocation>
        <location evidence="1">Host nucleus</location>
    </subcellularLocation>
    <subcellularLocation>
        <location evidence="1">Host extracellular space</location>
    </subcellularLocation>
    <text evidence="1">Incorporation into virion is dependent on p6 GAG sequences. Lacks a canonical nuclear localization signal, thus import into nucleus may function independently of the human importin pathway. Detected in high quantity in the serum and cerebrospinal fluid of AIDS patient.</text>
</comment>
<comment type="PTM">
    <text evidence="1">Phosphorylated on several residues by host. These phosphorylations regulate VPR activity for the nuclear import of the HIV-1 pre-integration complex.</text>
</comment>
<comment type="miscellaneous">
    <text evidence="1">HIV-1 lineages are divided in three main groups, M (for Major), O (for Outlier), and N (for New, or Non-M, Non-O). The vast majority of strains found worldwide belong to the group M. Group O seems to be endemic to and largely confined to Cameroon and neighboring countries in West Central Africa, where these viruses represent a small minority of HIV-1 strains. The group N is represented by a limited number of isolates from Cameroonian persons. The group M is further subdivided in 9 clades or subtypes (A to D, F to H, J and K).</text>
</comment>
<comment type="similarity">
    <text evidence="1">Belongs to the HIV-1 VPR protein family.</text>
</comment>
<feature type="chain" id="PRO_0000085453" description="Protein Vpr">
    <location>
        <begin position="1"/>
        <end position="78"/>
    </location>
</feature>
<feature type="region of interest" description="Homooligomerization" evidence="1">
    <location>
        <begin position="1"/>
        <end position="42"/>
    </location>
</feature>
<sequence>MEQAPEDQGPQREPHNEWTLELLEELKNEAVRHFPRIWLHGLGQHIYETYGDTWAGVEAIIRILQQLLFIHFQNWVST</sequence>
<keyword id="KW-0010">Activator</keyword>
<keyword id="KW-0014">AIDS</keyword>
<keyword id="KW-0053">Apoptosis</keyword>
<keyword id="KW-0131">Cell cycle</keyword>
<keyword id="KW-1079">Host G2/M cell cycle arrest by virus</keyword>
<keyword id="KW-1048">Host nucleus</keyword>
<keyword id="KW-0945">Host-virus interaction</keyword>
<keyword id="KW-0407">Ion channel</keyword>
<keyword id="KW-0406">Ion transport</keyword>
<keyword id="KW-1121">Modulation of host cell cycle by virus</keyword>
<keyword id="KW-0597">Phosphoprotein</keyword>
<keyword id="KW-0804">Transcription</keyword>
<keyword id="KW-0805">Transcription regulation</keyword>
<keyword id="KW-0813">Transport</keyword>
<keyword id="KW-1163">Viral penetration into host nucleus</keyword>
<keyword id="KW-0946">Virion</keyword>
<keyword id="KW-1160">Virus entry into host cell</keyword>
<dbReference type="EMBL" id="M11840">
    <property type="protein sequence ID" value="AAA44998.1"/>
    <property type="molecule type" value="Genomic_RNA"/>
</dbReference>
<dbReference type="SMR" id="P69728"/>
<dbReference type="IntAct" id="P69728">
    <property type="interactions" value="1"/>
</dbReference>
<dbReference type="MINT" id="P69728"/>
<dbReference type="GO" id="GO:0043657">
    <property type="term" value="C:host cell"/>
    <property type="evidence" value="ECO:0007669"/>
    <property type="project" value="GOC"/>
</dbReference>
<dbReference type="GO" id="GO:0042025">
    <property type="term" value="C:host cell nucleus"/>
    <property type="evidence" value="ECO:0007669"/>
    <property type="project" value="UniProtKB-SubCell"/>
</dbReference>
<dbReference type="GO" id="GO:0043655">
    <property type="term" value="C:host extracellular space"/>
    <property type="evidence" value="ECO:0007669"/>
    <property type="project" value="UniProtKB-SubCell"/>
</dbReference>
<dbReference type="GO" id="GO:0044423">
    <property type="term" value="C:virion component"/>
    <property type="evidence" value="ECO:0007669"/>
    <property type="project" value="UniProtKB-UniRule"/>
</dbReference>
<dbReference type="GO" id="GO:0006351">
    <property type="term" value="P:DNA-templated transcription"/>
    <property type="evidence" value="ECO:0007669"/>
    <property type="project" value="UniProtKB-UniRule"/>
</dbReference>
<dbReference type="GO" id="GO:0034220">
    <property type="term" value="P:monoatomic ion transmembrane transport"/>
    <property type="evidence" value="ECO:0007669"/>
    <property type="project" value="UniProtKB-KW"/>
</dbReference>
<dbReference type="GO" id="GO:0051260">
    <property type="term" value="P:protein homooligomerization"/>
    <property type="evidence" value="ECO:0007669"/>
    <property type="project" value="UniProtKB-UniRule"/>
</dbReference>
<dbReference type="GO" id="GO:0006355">
    <property type="term" value="P:regulation of DNA-templated transcription"/>
    <property type="evidence" value="ECO:0007669"/>
    <property type="project" value="UniProtKB-UniRule"/>
</dbReference>
<dbReference type="GO" id="GO:0046718">
    <property type="term" value="P:symbiont entry into host cell"/>
    <property type="evidence" value="ECO:0007669"/>
    <property type="project" value="UniProtKB-KW"/>
</dbReference>
<dbReference type="GO" id="GO:0052151">
    <property type="term" value="P:symbiont-mediated activation of host apoptosis"/>
    <property type="evidence" value="ECO:0007669"/>
    <property type="project" value="UniProtKB-UniRule"/>
</dbReference>
<dbReference type="GO" id="GO:0039592">
    <property type="term" value="P:symbiont-mediated arrest of host cell cycle during G2/M transition"/>
    <property type="evidence" value="ECO:0007669"/>
    <property type="project" value="UniProtKB-UniRule"/>
</dbReference>
<dbReference type="GO" id="GO:0075732">
    <property type="term" value="P:viral penetration into host nucleus"/>
    <property type="evidence" value="ECO:0007669"/>
    <property type="project" value="UniProtKB-UniRule"/>
</dbReference>
<dbReference type="Gene3D" id="6.10.210.10">
    <property type="match status" value="1"/>
</dbReference>
<dbReference type="Gene3D" id="1.20.5.90">
    <property type="entry name" value="VpR/VpX protein, C-terminal domain"/>
    <property type="match status" value="1"/>
</dbReference>
<dbReference type="HAMAP" id="MF_04080">
    <property type="entry name" value="HIV_VPR"/>
    <property type="match status" value="1"/>
</dbReference>
<dbReference type="InterPro" id="IPR000012">
    <property type="entry name" value="RetroV_VpR/X"/>
</dbReference>
<dbReference type="Pfam" id="PF00522">
    <property type="entry name" value="VPR"/>
    <property type="match status" value="1"/>
</dbReference>
<dbReference type="PRINTS" id="PR00444">
    <property type="entry name" value="HIVVPRVPX"/>
</dbReference>
<proteinExistence type="inferred from homology"/>
<reference key="1">
    <citation type="journal article" date="1986" name="Proc. Natl. Acad. Sci. U.S.A.">
        <title>Three novel genes of human T-lymphotropic virus type III: immune reactivity of their products with sera from acquired immune deficiency syndrome patients.</title>
        <authorList>
            <person name="Arya S.K."/>
            <person name="Gallo R.C."/>
        </authorList>
    </citation>
    <scope>NUCLEOTIDE SEQUENCE [GENOMIC RNA]</scope>
</reference>
<organism>
    <name type="scientific">Human immunodeficiency virus type 1 group M subtype B (isolate PCV12)</name>
    <name type="common">HIV-1</name>
    <dbReference type="NCBI Taxonomy" id="11679"/>
    <lineage>
        <taxon>Viruses</taxon>
        <taxon>Riboviria</taxon>
        <taxon>Pararnavirae</taxon>
        <taxon>Artverviricota</taxon>
        <taxon>Revtraviricetes</taxon>
        <taxon>Ortervirales</taxon>
        <taxon>Retroviridae</taxon>
        <taxon>Orthoretrovirinae</taxon>
        <taxon>Lentivirus</taxon>
        <taxon>Human immunodeficiency virus type 1</taxon>
    </lineage>
</organism>
<protein>
    <recommendedName>
        <fullName evidence="1">Protein Vpr</fullName>
    </recommendedName>
    <alternativeName>
        <fullName evidence="1">R ORF protein</fullName>
    </alternativeName>
    <alternativeName>
        <fullName evidence="1">Viral protein R</fullName>
    </alternativeName>
</protein>
<name>VPR_HV112</name>
<evidence type="ECO:0000255" key="1">
    <source>
        <dbReference type="HAMAP-Rule" id="MF_04080"/>
    </source>
</evidence>
<gene>
    <name evidence="1" type="primary">vpr</name>
</gene>
<accession>P69728</accession>
<accession>P05926</accession>
<accession>Q85577</accession>
<organismHost>
    <name type="scientific">Homo sapiens</name>
    <name type="common">Human</name>
    <dbReference type="NCBI Taxonomy" id="9606"/>
</organismHost>